<keyword id="KW-0963">Cytoplasm</keyword>
<keyword id="KW-0378">Hydrolase</keyword>
<keyword id="KW-0694">RNA-binding</keyword>
<keyword id="KW-0820">tRNA-binding</keyword>
<dbReference type="EC" id="3.1.1.96" evidence="1"/>
<dbReference type="EMBL" id="CP001279">
    <property type="protein sequence ID" value="ACM93479.1"/>
    <property type="molecule type" value="Genomic_DNA"/>
</dbReference>
<dbReference type="RefSeq" id="WP_015902531.1">
    <property type="nucleotide sequence ID" value="NC_012115.1"/>
</dbReference>
<dbReference type="SMR" id="B9L8Z4"/>
<dbReference type="STRING" id="598659.NAMH_0691"/>
<dbReference type="KEGG" id="nam:NAMH_0691"/>
<dbReference type="eggNOG" id="COG1490">
    <property type="taxonomic scope" value="Bacteria"/>
</dbReference>
<dbReference type="HOGENOM" id="CLU_076901_1_0_7"/>
<dbReference type="OrthoDB" id="9801395at2"/>
<dbReference type="Proteomes" id="UP000000448">
    <property type="component" value="Chromosome"/>
</dbReference>
<dbReference type="GO" id="GO:0005737">
    <property type="term" value="C:cytoplasm"/>
    <property type="evidence" value="ECO:0007669"/>
    <property type="project" value="UniProtKB-SubCell"/>
</dbReference>
<dbReference type="GO" id="GO:0051500">
    <property type="term" value="F:D-tyrosyl-tRNA(Tyr) deacylase activity"/>
    <property type="evidence" value="ECO:0007669"/>
    <property type="project" value="TreeGrafter"/>
</dbReference>
<dbReference type="GO" id="GO:0106026">
    <property type="term" value="F:Gly-tRNA(Ala) deacylase activity"/>
    <property type="evidence" value="ECO:0007669"/>
    <property type="project" value="UniProtKB-UniRule"/>
</dbReference>
<dbReference type="GO" id="GO:0043908">
    <property type="term" value="F:Ser(Gly)-tRNA(Ala) hydrolase activity"/>
    <property type="evidence" value="ECO:0007669"/>
    <property type="project" value="UniProtKB-UniRule"/>
</dbReference>
<dbReference type="GO" id="GO:0000049">
    <property type="term" value="F:tRNA binding"/>
    <property type="evidence" value="ECO:0007669"/>
    <property type="project" value="UniProtKB-UniRule"/>
</dbReference>
<dbReference type="GO" id="GO:0019478">
    <property type="term" value="P:D-amino acid catabolic process"/>
    <property type="evidence" value="ECO:0007669"/>
    <property type="project" value="UniProtKB-UniRule"/>
</dbReference>
<dbReference type="FunFam" id="3.50.80.10:FF:000001">
    <property type="entry name" value="D-aminoacyl-tRNA deacylase"/>
    <property type="match status" value="1"/>
</dbReference>
<dbReference type="Gene3D" id="3.50.80.10">
    <property type="entry name" value="D-tyrosyl-tRNA(Tyr) deacylase"/>
    <property type="match status" value="1"/>
</dbReference>
<dbReference type="HAMAP" id="MF_00518">
    <property type="entry name" value="Deacylase_Dtd"/>
    <property type="match status" value="1"/>
</dbReference>
<dbReference type="InterPro" id="IPR003732">
    <property type="entry name" value="Daa-tRNA_deacyls_DTD"/>
</dbReference>
<dbReference type="InterPro" id="IPR023509">
    <property type="entry name" value="DTD-like_sf"/>
</dbReference>
<dbReference type="NCBIfam" id="TIGR00256">
    <property type="entry name" value="D-aminoacyl-tRNA deacylase"/>
    <property type="match status" value="1"/>
</dbReference>
<dbReference type="PANTHER" id="PTHR10472:SF5">
    <property type="entry name" value="D-AMINOACYL-TRNA DEACYLASE 1"/>
    <property type="match status" value="1"/>
</dbReference>
<dbReference type="PANTHER" id="PTHR10472">
    <property type="entry name" value="D-TYROSYL-TRNA TYR DEACYLASE"/>
    <property type="match status" value="1"/>
</dbReference>
<dbReference type="Pfam" id="PF02580">
    <property type="entry name" value="Tyr_Deacylase"/>
    <property type="match status" value="1"/>
</dbReference>
<dbReference type="SUPFAM" id="SSF69500">
    <property type="entry name" value="DTD-like"/>
    <property type="match status" value="1"/>
</dbReference>
<gene>
    <name evidence="1" type="primary">dtd</name>
    <name type="ordered locus">NAMH_0691</name>
</gene>
<protein>
    <recommendedName>
        <fullName evidence="1">D-aminoacyl-tRNA deacylase</fullName>
        <shortName evidence="1">DTD</shortName>
        <ecNumber evidence="1">3.1.1.96</ecNumber>
    </recommendedName>
    <alternativeName>
        <fullName evidence="1">Gly-tRNA(Ala) deacylase</fullName>
    </alternativeName>
</protein>
<reference key="1">
    <citation type="journal article" date="2009" name="PLoS Genet.">
        <title>Adaptations to submarine hydrothermal environments exemplified by the genome of Nautilia profundicola.</title>
        <authorList>
            <person name="Campbell B.J."/>
            <person name="Smith J.L."/>
            <person name="Hanson T.E."/>
            <person name="Klotz M.G."/>
            <person name="Stein L.Y."/>
            <person name="Lee C.K."/>
            <person name="Wu D."/>
            <person name="Robinson J.M."/>
            <person name="Khouri H.M."/>
            <person name="Eisen J.A."/>
            <person name="Cary S.C."/>
        </authorList>
    </citation>
    <scope>NUCLEOTIDE SEQUENCE [LARGE SCALE GENOMIC DNA]</scope>
    <source>
        <strain>ATCC BAA-1463 / DSM 18972 / AmH</strain>
    </source>
</reference>
<comment type="function">
    <text evidence="1">An aminoacyl-tRNA editing enzyme that deacylates mischarged D-aminoacyl-tRNAs. Also deacylates mischarged glycyl-tRNA(Ala), protecting cells against glycine mischarging by AlaRS. Acts via tRNA-based rather than protein-based catalysis; rejects L-amino acids rather than detecting D-amino acids in the active site. By recycling D-aminoacyl-tRNA to D-amino acids and free tRNA molecules, this enzyme counteracts the toxicity associated with the formation of D-aminoacyl-tRNA entities in vivo and helps enforce protein L-homochirality.</text>
</comment>
<comment type="catalytic activity">
    <reaction evidence="1">
        <text>glycyl-tRNA(Ala) + H2O = tRNA(Ala) + glycine + H(+)</text>
        <dbReference type="Rhea" id="RHEA:53744"/>
        <dbReference type="Rhea" id="RHEA-COMP:9657"/>
        <dbReference type="Rhea" id="RHEA-COMP:13640"/>
        <dbReference type="ChEBI" id="CHEBI:15377"/>
        <dbReference type="ChEBI" id="CHEBI:15378"/>
        <dbReference type="ChEBI" id="CHEBI:57305"/>
        <dbReference type="ChEBI" id="CHEBI:78442"/>
        <dbReference type="ChEBI" id="CHEBI:78522"/>
        <dbReference type="EC" id="3.1.1.96"/>
    </reaction>
</comment>
<comment type="catalytic activity">
    <reaction evidence="1">
        <text>a D-aminoacyl-tRNA + H2O = a tRNA + a D-alpha-amino acid + H(+)</text>
        <dbReference type="Rhea" id="RHEA:13953"/>
        <dbReference type="Rhea" id="RHEA-COMP:10123"/>
        <dbReference type="Rhea" id="RHEA-COMP:10124"/>
        <dbReference type="ChEBI" id="CHEBI:15377"/>
        <dbReference type="ChEBI" id="CHEBI:15378"/>
        <dbReference type="ChEBI" id="CHEBI:59871"/>
        <dbReference type="ChEBI" id="CHEBI:78442"/>
        <dbReference type="ChEBI" id="CHEBI:79333"/>
        <dbReference type="EC" id="3.1.1.96"/>
    </reaction>
</comment>
<comment type="subunit">
    <text evidence="1">Homodimer.</text>
</comment>
<comment type="subcellular location">
    <subcellularLocation>
        <location evidence="1">Cytoplasm</location>
    </subcellularLocation>
</comment>
<comment type="domain">
    <text evidence="1">A Gly-cisPro motif from one monomer fits into the active site of the other monomer to allow specific chiral rejection of L-amino acids.</text>
</comment>
<comment type="similarity">
    <text evidence="1">Belongs to the DTD family.</text>
</comment>
<feature type="chain" id="PRO_1000146205" description="D-aminoacyl-tRNA deacylase">
    <location>
        <begin position="1"/>
        <end position="141"/>
    </location>
</feature>
<feature type="short sequence motif" description="Gly-cisPro motif, important for rejection of L-amino acids" evidence="1">
    <location>
        <begin position="133"/>
        <end position="134"/>
    </location>
</feature>
<accession>B9L8Z4</accession>
<proteinExistence type="inferred from homology"/>
<name>DTD_NAUPA</name>
<organism>
    <name type="scientific">Nautilia profundicola (strain ATCC BAA-1463 / DSM 18972 / AmH)</name>
    <dbReference type="NCBI Taxonomy" id="598659"/>
    <lineage>
        <taxon>Bacteria</taxon>
        <taxon>Pseudomonadati</taxon>
        <taxon>Campylobacterota</taxon>
        <taxon>Epsilonproteobacteria</taxon>
        <taxon>Nautiliales</taxon>
        <taxon>Nautiliaceae</taxon>
        <taxon>Nautilia</taxon>
    </lineage>
</organism>
<evidence type="ECO:0000255" key="1">
    <source>
        <dbReference type="HAMAP-Rule" id="MF_00518"/>
    </source>
</evidence>
<sequence length="141" mass="15809">MKAVLQRVKHSSVSVEGKLINEINEGLNVLIGFEKDDNDEKLKKMAKKIVSLRIFGERFEKSVADIKGEILLIPNFTIPAITKKGTRPNFQNSMQPSTAKEFYDKMVKELNNYIPTKAGVFGAEMQVEITNNGPVTIILEV</sequence>